<proteinExistence type="inferred from homology"/>
<gene>
    <name evidence="1" type="primary">frr</name>
    <name type="ordered locus">Sare_1233</name>
</gene>
<organism>
    <name type="scientific">Salinispora arenicola (strain CNS-205)</name>
    <dbReference type="NCBI Taxonomy" id="391037"/>
    <lineage>
        <taxon>Bacteria</taxon>
        <taxon>Bacillati</taxon>
        <taxon>Actinomycetota</taxon>
        <taxon>Actinomycetes</taxon>
        <taxon>Micromonosporales</taxon>
        <taxon>Micromonosporaceae</taxon>
        <taxon>Salinispora</taxon>
    </lineage>
</organism>
<keyword id="KW-0963">Cytoplasm</keyword>
<keyword id="KW-0648">Protein biosynthesis</keyword>
<protein>
    <recommendedName>
        <fullName evidence="1">Ribosome-recycling factor</fullName>
        <shortName evidence="1">RRF</shortName>
    </recommendedName>
    <alternativeName>
        <fullName evidence="1">Ribosome-releasing factor</fullName>
    </alternativeName>
</protein>
<accession>A8M6B4</accession>
<dbReference type="EMBL" id="CP000850">
    <property type="protein sequence ID" value="ABV97139.1"/>
    <property type="molecule type" value="Genomic_DNA"/>
</dbReference>
<dbReference type="SMR" id="A8M6B4"/>
<dbReference type="STRING" id="391037.Sare_1233"/>
<dbReference type="KEGG" id="saq:Sare_1233"/>
<dbReference type="PATRIC" id="fig|391037.6.peg.1249"/>
<dbReference type="eggNOG" id="COG0233">
    <property type="taxonomic scope" value="Bacteria"/>
</dbReference>
<dbReference type="HOGENOM" id="CLU_073981_2_0_11"/>
<dbReference type="OrthoDB" id="9804006at2"/>
<dbReference type="GO" id="GO:0005737">
    <property type="term" value="C:cytoplasm"/>
    <property type="evidence" value="ECO:0007669"/>
    <property type="project" value="UniProtKB-SubCell"/>
</dbReference>
<dbReference type="GO" id="GO:0043023">
    <property type="term" value="F:ribosomal large subunit binding"/>
    <property type="evidence" value="ECO:0007669"/>
    <property type="project" value="TreeGrafter"/>
</dbReference>
<dbReference type="GO" id="GO:0006415">
    <property type="term" value="P:translational termination"/>
    <property type="evidence" value="ECO:0007669"/>
    <property type="project" value="UniProtKB-UniRule"/>
</dbReference>
<dbReference type="CDD" id="cd00520">
    <property type="entry name" value="RRF"/>
    <property type="match status" value="1"/>
</dbReference>
<dbReference type="FunFam" id="1.10.132.20:FF:000001">
    <property type="entry name" value="Ribosome-recycling factor"/>
    <property type="match status" value="1"/>
</dbReference>
<dbReference type="FunFam" id="3.30.1360.40:FF:000001">
    <property type="entry name" value="Ribosome-recycling factor"/>
    <property type="match status" value="1"/>
</dbReference>
<dbReference type="Gene3D" id="3.30.1360.40">
    <property type="match status" value="1"/>
</dbReference>
<dbReference type="Gene3D" id="1.10.132.20">
    <property type="entry name" value="Ribosome-recycling factor"/>
    <property type="match status" value="1"/>
</dbReference>
<dbReference type="HAMAP" id="MF_00040">
    <property type="entry name" value="RRF"/>
    <property type="match status" value="1"/>
</dbReference>
<dbReference type="InterPro" id="IPR002661">
    <property type="entry name" value="Ribosome_recyc_fac"/>
</dbReference>
<dbReference type="InterPro" id="IPR023584">
    <property type="entry name" value="Ribosome_recyc_fac_dom"/>
</dbReference>
<dbReference type="InterPro" id="IPR036191">
    <property type="entry name" value="RRF_sf"/>
</dbReference>
<dbReference type="NCBIfam" id="TIGR00496">
    <property type="entry name" value="frr"/>
    <property type="match status" value="1"/>
</dbReference>
<dbReference type="PANTHER" id="PTHR20982:SF3">
    <property type="entry name" value="MITOCHONDRIAL RIBOSOME RECYCLING FACTOR PSEUDO 1"/>
    <property type="match status" value="1"/>
</dbReference>
<dbReference type="PANTHER" id="PTHR20982">
    <property type="entry name" value="RIBOSOME RECYCLING FACTOR"/>
    <property type="match status" value="1"/>
</dbReference>
<dbReference type="Pfam" id="PF01765">
    <property type="entry name" value="RRF"/>
    <property type="match status" value="1"/>
</dbReference>
<dbReference type="SUPFAM" id="SSF55194">
    <property type="entry name" value="Ribosome recycling factor, RRF"/>
    <property type="match status" value="1"/>
</dbReference>
<evidence type="ECO:0000255" key="1">
    <source>
        <dbReference type="HAMAP-Rule" id="MF_00040"/>
    </source>
</evidence>
<name>RRF_SALAI</name>
<sequence length="185" mass="21063">MIDETLLEAEEKMERAIEHAKEEFGAIRTGRANAAMFSKIIIDYYGSPTPLPQMASIGVPEPRMVIIKPYDNSQTNAMEKAIRDSDLGVNPNNEGNQLRILLPQMTEERRREMIKVARHKGEEAKVAVRNIRRKAKEELDRLVKAGEVGEDEGRRAEKELDDLTQRFVGVVDELIKHKEAELLEV</sequence>
<feature type="chain" id="PRO_1000074596" description="Ribosome-recycling factor">
    <location>
        <begin position="1"/>
        <end position="185"/>
    </location>
</feature>
<comment type="function">
    <text evidence="1">Responsible for the release of ribosomes from messenger RNA at the termination of protein biosynthesis. May increase the efficiency of translation by recycling ribosomes from one round of translation to another.</text>
</comment>
<comment type="subcellular location">
    <subcellularLocation>
        <location evidence="1">Cytoplasm</location>
    </subcellularLocation>
</comment>
<comment type="similarity">
    <text evidence="1">Belongs to the RRF family.</text>
</comment>
<reference key="1">
    <citation type="submission" date="2007-10" db="EMBL/GenBank/DDBJ databases">
        <title>Complete sequence of Salinispora arenicola CNS-205.</title>
        <authorList>
            <consortium name="US DOE Joint Genome Institute"/>
            <person name="Copeland A."/>
            <person name="Lucas S."/>
            <person name="Lapidus A."/>
            <person name="Barry K."/>
            <person name="Glavina del Rio T."/>
            <person name="Dalin E."/>
            <person name="Tice H."/>
            <person name="Pitluck S."/>
            <person name="Foster B."/>
            <person name="Schmutz J."/>
            <person name="Larimer F."/>
            <person name="Land M."/>
            <person name="Hauser L."/>
            <person name="Kyrpides N."/>
            <person name="Ivanova N."/>
            <person name="Jensen P.R."/>
            <person name="Moore B.S."/>
            <person name="Penn K."/>
            <person name="Jenkins C."/>
            <person name="Udwary D."/>
            <person name="Xiang L."/>
            <person name="Gontang E."/>
            <person name="Richardson P."/>
        </authorList>
    </citation>
    <scope>NUCLEOTIDE SEQUENCE [LARGE SCALE GENOMIC DNA]</scope>
    <source>
        <strain>CNS-205</strain>
    </source>
</reference>